<reference key="1">
    <citation type="journal article" date="2002" name="Genome Res.">
        <title>The genome of Methanosarcina acetivorans reveals extensive metabolic and physiological diversity.</title>
        <authorList>
            <person name="Galagan J.E."/>
            <person name="Nusbaum C."/>
            <person name="Roy A."/>
            <person name="Endrizzi M.G."/>
            <person name="Macdonald P."/>
            <person name="FitzHugh W."/>
            <person name="Calvo S."/>
            <person name="Engels R."/>
            <person name="Smirnov S."/>
            <person name="Atnoor D."/>
            <person name="Brown A."/>
            <person name="Allen N."/>
            <person name="Naylor J."/>
            <person name="Stange-Thomann N."/>
            <person name="DeArellano K."/>
            <person name="Johnson R."/>
            <person name="Linton L."/>
            <person name="McEwan P."/>
            <person name="McKernan K."/>
            <person name="Talamas J."/>
            <person name="Tirrell A."/>
            <person name="Ye W."/>
            <person name="Zimmer A."/>
            <person name="Barber R.D."/>
            <person name="Cann I."/>
            <person name="Graham D.E."/>
            <person name="Grahame D.A."/>
            <person name="Guss A.M."/>
            <person name="Hedderich R."/>
            <person name="Ingram-Smith C."/>
            <person name="Kuettner H.C."/>
            <person name="Krzycki J.A."/>
            <person name="Leigh J.A."/>
            <person name="Li W."/>
            <person name="Liu J."/>
            <person name="Mukhopadhyay B."/>
            <person name="Reeve J.N."/>
            <person name="Smith K."/>
            <person name="Springer T.A."/>
            <person name="Umayam L.A."/>
            <person name="White O."/>
            <person name="White R.H."/>
            <person name="de Macario E.C."/>
            <person name="Ferry J.G."/>
            <person name="Jarrell K.F."/>
            <person name="Jing H."/>
            <person name="Macario A.J.L."/>
            <person name="Paulsen I.T."/>
            <person name="Pritchett M."/>
            <person name="Sowers K.R."/>
            <person name="Swanson R.V."/>
            <person name="Zinder S.H."/>
            <person name="Lander E."/>
            <person name="Metcalf W.W."/>
            <person name="Birren B."/>
        </authorList>
    </citation>
    <scope>NUCLEOTIDE SEQUENCE [LARGE SCALE GENOMIC DNA]</scope>
    <source>
        <strain>ATCC 35395 / DSM 2834 / JCM 12185 / C2A</strain>
    </source>
</reference>
<proteinExistence type="inferred from homology"/>
<dbReference type="EMBL" id="AE010299">
    <property type="protein sequence ID" value="AAM03731.1"/>
    <property type="molecule type" value="Genomic_DNA"/>
</dbReference>
<dbReference type="RefSeq" id="WP_011020336.1">
    <property type="nucleotide sequence ID" value="NC_003552.1"/>
</dbReference>
<dbReference type="SMR" id="Q8TTZ7"/>
<dbReference type="FunCoup" id="Q8TTZ7">
    <property type="interactions" value="144"/>
</dbReference>
<dbReference type="STRING" id="188937.MA_0278"/>
<dbReference type="EnsemblBacteria" id="AAM03731">
    <property type="protein sequence ID" value="AAM03731"/>
    <property type="gene ID" value="MA_0278"/>
</dbReference>
<dbReference type="GeneID" id="1472170"/>
<dbReference type="KEGG" id="mac:MA_0278"/>
<dbReference type="HOGENOM" id="CLU_060161_4_3_2"/>
<dbReference type="InParanoid" id="Q8TTZ7"/>
<dbReference type="OrthoDB" id="350539at2157"/>
<dbReference type="PhylomeDB" id="Q8TTZ7"/>
<dbReference type="Proteomes" id="UP000002487">
    <property type="component" value="Chromosome"/>
</dbReference>
<dbReference type="GO" id="GO:0003677">
    <property type="term" value="F:DNA binding"/>
    <property type="evidence" value="ECO:0007669"/>
    <property type="project" value="UniProtKB-KW"/>
</dbReference>
<dbReference type="GO" id="GO:0003700">
    <property type="term" value="F:DNA-binding transcription factor activity"/>
    <property type="evidence" value="ECO:0007669"/>
    <property type="project" value="UniProtKB-UniRule"/>
</dbReference>
<dbReference type="GO" id="GO:0140223">
    <property type="term" value="F:general transcription initiation factor activity"/>
    <property type="evidence" value="ECO:0000318"/>
    <property type="project" value="GO_Central"/>
</dbReference>
<dbReference type="GO" id="GO:0006352">
    <property type="term" value="P:DNA-templated transcription initiation"/>
    <property type="evidence" value="ECO:0000318"/>
    <property type="project" value="GO_Central"/>
</dbReference>
<dbReference type="FunFam" id="3.30.310.10:FF:000007">
    <property type="entry name" value="TATA-box-binding protein"/>
    <property type="match status" value="1"/>
</dbReference>
<dbReference type="FunFam" id="3.30.310.10:FF:000010">
    <property type="entry name" value="TATA-box-binding protein"/>
    <property type="match status" value="1"/>
</dbReference>
<dbReference type="Gene3D" id="3.30.310.10">
    <property type="entry name" value="TATA-Binding Protein"/>
    <property type="match status" value="2"/>
</dbReference>
<dbReference type="HAMAP" id="MF_00408">
    <property type="entry name" value="TATA_bind_prot_arch"/>
    <property type="match status" value="1"/>
</dbReference>
<dbReference type="InterPro" id="IPR000814">
    <property type="entry name" value="TBP"/>
</dbReference>
<dbReference type="InterPro" id="IPR030491">
    <property type="entry name" value="TBP_CS"/>
</dbReference>
<dbReference type="InterPro" id="IPR012295">
    <property type="entry name" value="TBP_dom_sf"/>
</dbReference>
<dbReference type="NCBIfam" id="NF001593">
    <property type="entry name" value="PRK00394.1-2"/>
    <property type="match status" value="1"/>
</dbReference>
<dbReference type="NCBIfam" id="NF001599">
    <property type="entry name" value="PRK00394.2-4"/>
    <property type="match status" value="1"/>
</dbReference>
<dbReference type="PANTHER" id="PTHR10126">
    <property type="entry name" value="TATA-BOX BINDING PROTEIN"/>
    <property type="match status" value="1"/>
</dbReference>
<dbReference type="Pfam" id="PF00352">
    <property type="entry name" value="TBP"/>
    <property type="match status" value="2"/>
</dbReference>
<dbReference type="PRINTS" id="PR00686">
    <property type="entry name" value="TIFACTORIID"/>
</dbReference>
<dbReference type="SUPFAM" id="SSF55945">
    <property type="entry name" value="TATA-box binding protein-like"/>
    <property type="match status" value="2"/>
</dbReference>
<dbReference type="PROSITE" id="PS00351">
    <property type="entry name" value="TFIID"/>
    <property type="match status" value="2"/>
</dbReference>
<feature type="chain" id="PRO_0000154007" description="TATA-box-binding protein 3">
    <location>
        <begin position="1"/>
        <end position="185"/>
    </location>
</feature>
<feature type="repeat" description="1">
    <location>
        <begin position="7"/>
        <end position="84"/>
    </location>
</feature>
<feature type="repeat" description="2">
    <location>
        <begin position="100"/>
        <end position="178"/>
    </location>
</feature>
<comment type="function">
    <text evidence="1">General factor that plays a role in the activation of archaeal genes transcribed by RNA polymerase. Binds specifically to the TATA box promoter element which lies close to the position of transcription initiation.</text>
</comment>
<comment type="similarity">
    <text evidence="1">Belongs to the TBP family.</text>
</comment>
<name>TBP3_METAC</name>
<evidence type="ECO:0000255" key="1">
    <source>
        <dbReference type="HAMAP-Rule" id="MF_00408"/>
    </source>
</evidence>
<sequence length="185" mass="20048">MESTITIENVVASTALATEFDLVKIMDSGLEGAEYNKTKFPGLVYRIDNPKAAFLIFTSGKVVCTGAKTINNAHKAITNLANKLKDIGCDKINLEPEIHVQNIVASADLKTTLNLNTIAIAFGLENVEYEPEVFPGLIYRVEAPKVVVLVFSSGKLVITGGKCEEDCNGGLRIVRKEFDNLGLLC</sequence>
<organism>
    <name type="scientific">Methanosarcina acetivorans (strain ATCC 35395 / DSM 2834 / JCM 12185 / C2A)</name>
    <dbReference type="NCBI Taxonomy" id="188937"/>
    <lineage>
        <taxon>Archaea</taxon>
        <taxon>Methanobacteriati</taxon>
        <taxon>Methanobacteriota</taxon>
        <taxon>Stenosarchaea group</taxon>
        <taxon>Methanomicrobia</taxon>
        <taxon>Methanosarcinales</taxon>
        <taxon>Methanosarcinaceae</taxon>
        <taxon>Methanosarcina</taxon>
    </lineage>
</organism>
<keyword id="KW-0238">DNA-binding</keyword>
<keyword id="KW-1185">Reference proteome</keyword>
<keyword id="KW-0677">Repeat</keyword>
<keyword id="KW-0804">Transcription</keyword>
<keyword id="KW-0805">Transcription regulation</keyword>
<protein>
    <recommendedName>
        <fullName evidence="1">TATA-box-binding protein 3</fullName>
    </recommendedName>
    <alternativeName>
        <fullName evidence="1">Box A-binding protein 3</fullName>
        <shortName evidence="1">BAP 3</shortName>
    </alternativeName>
    <alternativeName>
        <fullName evidence="1">TATA sequence-binding protein 3</fullName>
        <shortName evidence="1">TBP 3</shortName>
    </alternativeName>
    <alternativeName>
        <fullName evidence="1">TATA-box factor 3</fullName>
    </alternativeName>
</protein>
<gene>
    <name evidence="1" type="primary">tbp3</name>
    <name type="synonym">tbp-3</name>
    <name type="ordered locus">MA_0278</name>
</gene>
<accession>Q8TTZ7</accession>